<reference key="1">
    <citation type="journal article" date="2004" name="Nat. Genet.">
        <title>Complete sequencing and characterization of 21,243 full-length human cDNAs.</title>
        <authorList>
            <person name="Ota T."/>
            <person name="Suzuki Y."/>
            <person name="Nishikawa T."/>
            <person name="Otsuki T."/>
            <person name="Sugiyama T."/>
            <person name="Irie R."/>
            <person name="Wakamatsu A."/>
            <person name="Hayashi K."/>
            <person name="Sato H."/>
            <person name="Nagai K."/>
            <person name="Kimura K."/>
            <person name="Makita H."/>
            <person name="Sekine M."/>
            <person name="Obayashi M."/>
            <person name="Nishi T."/>
            <person name="Shibahara T."/>
            <person name="Tanaka T."/>
            <person name="Ishii S."/>
            <person name="Yamamoto J."/>
            <person name="Saito K."/>
            <person name="Kawai Y."/>
            <person name="Isono Y."/>
            <person name="Nakamura Y."/>
            <person name="Nagahari K."/>
            <person name="Murakami K."/>
            <person name="Yasuda T."/>
            <person name="Iwayanagi T."/>
            <person name="Wagatsuma M."/>
            <person name="Shiratori A."/>
            <person name="Sudo H."/>
            <person name="Hosoiri T."/>
            <person name="Kaku Y."/>
            <person name="Kodaira H."/>
            <person name="Kondo H."/>
            <person name="Sugawara M."/>
            <person name="Takahashi M."/>
            <person name="Kanda K."/>
            <person name="Yokoi T."/>
            <person name="Furuya T."/>
            <person name="Kikkawa E."/>
            <person name="Omura Y."/>
            <person name="Abe K."/>
            <person name="Kamihara K."/>
            <person name="Katsuta N."/>
            <person name="Sato K."/>
            <person name="Tanikawa M."/>
            <person name="Yamazaki M."/>
            <person name="Ninomiya K."/>
            <person name="Ishibashi T."/>
            <person name="Yamashita H."/>
            <person name="Murakawa K."/>
            <person name="Fujimori K."/>
            <person name="Tanai H."/>
            <person name="Kimata M."/>
            <person name="Watanabe M."/>
            <person name="Hiraoka S."/>
            <person name="Chiba Y."/>
            <person name="Ishida S."/>
            <person name="Ono Y."/>
            <person name="Takiguchi S."/>
            <person name="Watanabe S."/>
            <person name="Yosida M."/>
            <person name="Hotuta T."/>
            <person name="Kusano J."/>
            <person name="Kanehori K."/>
            <person name="Takahashi-Fujii A."/>
            <person name="Hara H."/>
            <person name="Tanase T.-O."/>
            <person name="Nomura Y."/>
            <person name="Togiya S."/>
            <person name="Komai F."/>
            <person name="Hara R."/>
            <person name="Takeuchi K."/>
            <person name="Arita M."/>
            <person name="Imose N."/>
            <person name="Musashino K."/>
            <person name="Yuuki H."/>
            <person name="Oshima A."/>
            <person name="Sasaki N."/>
            <person name="Aotsuka S."/>
            <person name="Yoshikawa Y."/>
            <person name="Matsunawa H."/>
            <person name="Ichihara T."/>
            <person name="Shiohata N."/>
            <person name="Sano S."/>
            <person name="Moriya S."/>
            <person name="Momiyama H."/>
            <person name="Satoh N."/>
            <person name="Takami S."/>
            <person name="Terashima Y."/>
            <person name="Suzuki O."/>
            <person name="Nakagawa S."/>
            <person name="Senoh A."/>
            <person name="Mizoguchi H."/>
            <person name="Goto Y."/>
            <person name="Shimizu F."/>
            <person name="Wakebe H."/>
            <person name="Hishigaki H."/>
            <person name="Watanabe T."/>
            <person name="Sugiyama A."/>
            <person name="Takemoto M."/>
            <person name="Kawakami B."/>
            <person name="Yamazaki M."/>
            <person name="Watanabe K."/>
            <person name="Kumagai A."/>
            <person name="Itakura S."/>
            <person name="Fukuzumi Y."/>
            <person name="Fujimori Y."/>
            <person name="Komiyama M."/>
            <person name="Tashiro H."/>
            <person name="Tanigami A."/>
            <person name="Fujiwara T."/>
            <person name="Ono T."/>
            <person name="Yamada K."/>
            <person name="Fujii Y."/>
            <person name="Ozaki K."/>
            <person name="Hirao M."/>
            <person name="Ohmori Y."/>
            <person name="Kawabata A."/>
            <person name="Hikiji T."/>
            <person name="Kobatake N."/>
            <person name="Inagaki H."/>
            <person name="Ikema Y."/>
            <person name="Okamoto S."/>
            <person name="Okitani R."/>
            <person name="Kawakami T."/>
            <person name="Noguchi S."/>
            <person name="Itoh T."/>
            <person name="Shigeta K."/>
            <person name="Senba T."/>
            <person name="Matsumura K."/>
            <person name="Nakajima Y."/>
            <person name="Mizuno T."/>
            <person name="Morinaga M."/>
            <person name="Sasaki M."/>
            <person name="Togashi T."/>
            <person name="Oyama M."/>
            <person name="Hata H."/>
            <person name="Watanabe M."/>
            <person name="Komatsu T."/>
            <person name="Mizushima-Sugano J."/>
            <person name="Satoh T."/>
            <person name="Shirai Y."/>
            <person name="Takahashi Y."/>
            <person name="Nakagawa K."/>
            <person name="Okumura K."/>
            <person name="Nagase T."/>
            <person name="Nomura N."/>
            <person name="Kikuchi H."/>
            <person name="Masuho Y."/>
            <person name="Yamashita R."/>
            <person name="Nakai K."/>
            <person name="Yada T."/>
            <person name="Nakamura Y."/>
            <person name="Ohara O."/>
            <person name="Isogai T."/>
            <person name="Sugano S."/>
        </authorList>
    </citation>
    <scope>NUCLEOTIDE SEQUENCE [LARGE SCALE MRNA]</scope>
    <source>
        <tissue>Brain</tissue>
    </source>
</reference>
<sequence>MRLCLIPRNTGTPQRVLRPVVWSPPSRKKPVLSPHNSIMFGHLSPVRIPCLRGKFNLQLPSLDDQVIPARLPKTEVSAEEPKEATEVKDQVETQGQEDNKRGPCSNGEAASTSRPLETQGNLTSSWYNPRPLEGNVHLKSLTEKNQTDKAQVHAVSFYSKGHGVASSHSPAGGILPFGKPDPLPTVLPAPVPGCSLWPEKAALKVLGEDHLPSSPGLLMVGEDMQPKDPAALGSSRSSPPRAAGHRSHKRKLSGPPLQLQPTPPLQLRCDRDERPPPAKLPCLSPEALLVGQASQREGRLQHGNMRKNMRVLSRISKFRRLRQLLRRRKKTRQGRRGGSCL</sequence>
<dbReference type="EMBL" id="AK094743">
    <property type="protein sequence ID" value="BAC04410.1"/>
    <property type="molecule type" value="mRNA"/>
</dbReference>
<dbReference type="SMR" id="Q8N9G6"/>
<dbReference type="GlyGen" id="Q8N9G6">
    <property type="glycosylation" value="3 sites, 1 O-linked glycan (2 sites)"/>
</dbReference>
<dbReference type="iPTMnet" id="Q8N9G6"/>
<dbReference type="PhosphoSitePlus" id="Q8N9G6"/>
<dbReference type="BioMuta" id="-"/>
<dbReference type="DMDM" id="74729680"/>
<dbReference type="PeptideAtlas" id="Q8N9G6"/>
<dbReference type="neXtProt" id="NX_Q8N9G6"/>
<dbReference type="InParanoid" id="Q8N9G6"/>
<dbReference type="PAN-GO" id="Q8N9G6">
    <property type="GO annotations" value="4 GO annotations based on evolutionary models"/>
</dbReference>
<dbReference type="PhylomeDB" id="Q8N9G6"/>
<dbReference type="Pharos" id="Q8N9G6">
    <property type="development level" value="Tdark"/>
</dbReference>
<dbReference type="Proteomes" id="UP000005640">
    <property type="component" value="Unplaced"/>
</dbReference>
<dbReference type="RNAct" id="Q8N9G6">
    <property type="molecule type" value="protein"/>
</dbReference>
<dbReference type="InterPro" id="IPR043220">
    <property type="entry name" value="POM121-like_prot_1"/>
</dbReference>
<dbReference type="PANTHER" id="PTHR15566">
    <property type="entry name" value="POM121-LIKE"/>
    <property type="match status" value="1"/>
</dbReference>
<dbReference type="PANTHER" id="PTHR15566:SF7">
    <property type="entry name" value="UPF0607 PROTEIN ENSP00000332738-RELATED"/>
    <property type="match status" value="1"/>
</dbReference>
<dbReference type="Pfam" id="PF15229">
    <property type="entry name" value="POM121"/>
    <property type="match status" value="1"/>
</dbReference>
<proteinExistence type="evidence at transcript level"/>
<name>YJ012_HUMAN</name>
<comment type="similarity">
    <text evidence="2">Belongs to the UPF0607 family.</text>
</comment>
<evidence type="ECO:0000256" key="1">
    <source>
        <dbReference type="SAM" id="MobiDB-lite"/>
    </source>
</evidence>
<evidence type="ECO:0000305" key="2"/>
<protein>
    <recommendedName>
        <fullName>Putative UPF0607 protein FLJ37424</fullName>
    </recommendedName>
</protein>
<accession>Q8N9G6</accession>
<keyword id="KW-1185">Reference proteome</keyword>
<feature type="chain" id="PRO_0000342526" description="Putative UPF0607 protein FLJ37424">
    <location>
        <begin position="1"/>
        <end position="341"/>
    </location>
</feature>
<feature type="region of interest" description="Disordered" evidence="1">
    <location>
        <begin position="72"/>
        <end position="131"/>
    </location>
</feature>
<feature type="region of interest" description="Disordered" evidence="1">
    <location>
        <begin position="216"/>
        <end position="283"/>
    </location>
</feature>
<feature type="compositionally biased region" description="Basic and acidic residues" evidence="1">
    <location>
        <begin position="79"/>
        <end position="101"/>
    </location>
</feature>
<feature type="compositionally biased region" description="Polar residues" evidence="1">
    <location>
        <begin position="108"/>
        <end position="127"/>
    </location>
</feature>
<feature type="compositionally biased region" description="Basic residues" evidence="1">
    <location>
        <begin position="243"/>
        <end position="252"/>
    </location>
</feature>
<organism>
    <name type="scientific">Homo sapiens</name>
    <name type="common">Human</name>
    <dbReference type="NCBI Taxonomy" id="9606"/>
    <lineage>
        <taxon>Eukaryota</taxon>
        <taxon>Metazoa</taxon>
        <taxon>Chordata</taxon>
        <taxon>Craniata</taxon>
        <taxon>Vertebrata</taxon>
        <taxon>Euteleostomi</taxon>
        <taxon>Mammalia</taxon>
        <taxon>Eutheria</taxon>
        <taxon>Euarchontoglires</taxon>
        <taxon>Primates</taxon>
        <taxon>Haplorrhini</taxon>
        <taxon>Catarrhini</taxon>
        <taxon>Hominidae</taxon>
        <taxon>Homo</taxon>
    </lineage>
</organism>